<protein>
    <recommendedName>
        <fullName evidence="1">Probable 2-(5''-triphosphoribosyl)-3'-dephosphocoenzyme-A synthase</fullName>
        <shortName evidence="1">2-(5''-triphosphoribosyl)-3'-dephospho-CoA synthase</shortName>
        <ecNumber evidence="1">2.4.2.52</ecNumber>
    </recommendedName>
</protein>
<organism>
    <name type="scientific">Pseudomonas aeruginosa (strain UCBPP-PA14)</name>
    <dbReference type="NCBI Taxonomy" id="208963"/>
    <lineage>
        <taxon>Bacteria</taxon>
        <taxon>Pseudomonadati</taxon>
        <taxon>Pseudomonadota</taxon>
        <taxon>Gammaproteobacteria</taxon>
        <taxon>Pseudomonadales</taxon>
        <taxon>Pseudomonadaceae</taxon>
        <taxon>Pseudomonas</taxon>
    </lineage>
</organism>
<feature type="chain" id="PRO_1000049597" description="Probable 2-(5''-triphosphoribosyl)-3'-dephosphocoenzyme-A synthase">
    <location>
        <begin position="1"/>
        <end position="293"/>
    </location>
</feature>
<sequence>MNAIANLAATLRADLGECLADLAVDALIDEAELSPKPALVDRRGNGAHADLHLGLMQASALSLWPCFKEMADAAQRHGRIDARLRGVLGQLGRDGEAAMLRTTEGVNTHRGAIWALGLLVAAAALEPRRTQAGEVAARAGRIALLDDPAAAIGDSHGERVRRRYGVGGAREEARLGFPRAVRHGLPQLWRSREGGAGEQNARLDALLAIMSVLDDTCVLHRAGRVGLAAMQDGARAVLAAGGSASLAGRRRLCELDRRLLALNASPGGAADLLAACLFLDRLPAVSGGWAGSL</sequence>
<accession>Q02UM6</accession>
<keyword id="KW-0067">ATP-binding</keyword>
<keyword id="KW-0547">Nucleotide-binding</keyword>
<keyword id="KW-0808">Transferase</keyword>
<evidence type="ECO:0000255" key="1">
    <source>
        <dbReference type="HAMAP-Rule" id="MF_01883"/>
    </source>
</evidence>
<comment type="function">
    <text evidence="1">Involved in the formation of 2-(5''-phosphoribosyl)-3'-dephosphocoenzyme-A, the prosthetic group of the acyl-carrier protein of the malonate decarboxylase.</text>
</comment>
<comment type="catalytic activity">
    <reaction evidence="1">
        <text>3'-dephospho-CoA + ATP = 2'-(5''-triphospho-alpha-D-ribosyl)-3'-dephospho-CoA + adenine</text>
        <dbReference type="Rhea" id="RHEA:15117"/>
        <dbReference type="ChEBI" id="CHEBI:16708"/>
        <dbReference type="ChEBI" id="CHEBI:30616"/>
        <dbReference type="ChEBI" id="CHEBI:57328"/>
        <dbReference type="ChEBI" id="CHEBI:61378"/>
        <dbReference type="EC" id="2.4.2.52"/>
    </reaction>
</comment>
<comment type="similarity">
    <text evidence="1">Belongs to the CitG/MdcB family.</text>
</comment>
<gene>
    <name evidence="1" type="primary">mdcB</name>
    <name type="ordered locus">PA14_02560</name>
</gene>
<proteinExistence type="inferred from homology"/>
<reference key="1">
    <citation type="journal article" date="2006" name="Genome Biol.">
        <title>Genomic analysis reveals that Pseudomonas aeruginosa virulence is combinatorial.</title>
        <authorList>
            <person name="Lee D.G."/>
            <person name="Urbach J.M."/>
            <person name="Wu G."/>
            <person name="Liberati N.T."/>
            <person name="Feinbaum R.L."/>
            <person name="Miyata S."/>
            <person name="Diggins L.T."/>
            <person name="He J."/>
            <person name="Saucier M."/>
            <person name="Deziel E."/>
            <person name="Friedman L."/>
            <person name="Li L."/>
            <person name="Grills G."/>
            <person name="Montgomery K."/>
            <person name="Kucherlapati R."/>
            <person name="Rahme L.G."/>
            <person name="Ausubel F.M."/>
        </authorList>
    </citation>
    <scope>NUCLEOTIDE SEQUENCE [LARGE SCALE GENOMIC DNA]</scope>
    <source>
        <strain>UCBPP-PA14</strain>
    </source>
</reference>
<dbReference type="EC" id="2.4.2.52" evidence="1"/>
<dbReference type="EMBL" id="CP000438">
    <property type="protein sequence ID" value="ABJ15158.1"/>
    <property type="molecule type" value="Genomic_DNA"/>
</dbReference>
<dbReference type="RefSeq" id="WP_003137092.1">
    <property type="nucleotide sequence ID" value="NZ_CP034244.1"/>
</dbReference>
<dbReference type="KEGG" id="pau:PA14_02560"/>
<dbReference type="PseudoCAP" id="PA14_02560"/>
<dbReference type="HOGENOM" id="CLU_056179_0_0_6"/>
<dbReference type="BioCyc" id="PAER208963:G1G74-211-MONOMER"/>
<dbReference type="Proteomes" id="UP000000653">
    <property type="component" value="Chromosome"/>
</dbReference>
<dbReference type="GO" id="GO:0005524">
    <property type="term" value="F:ATP binding"/>
    <property type="evidence" value="ECO:0007669"/>
    <property type="project" value="UniProtKB-KW"/>
</dbReference>
<dbReference type="GO" id="GO:0046917">
    <property type="term" value="F:triphosphoribosyl-dephospho-CoA synthase activity"/>
    <property type="evidence" value="ECO:0007669"/>
    <property type="project" value="UniProtKB-UniRule"/>
</dbReference>
<dbReference type="GO" id="GO:0051191">
    <property type="term" value="P:prosthetic group biosynthetic process"/>
    <property type="evidence" value="ECO:0007669"/>
    <property type="project" value="TreeGrafter"/>
</dbReference>
<dbReference type="FunFam" id="1.10.4200.10:FF:000002">
    <property type="entry name" value="Probable 2-(5''-triphosphoribosyl)-3'-dephosphocoenzyme-A synthase"/>
    <property type="match status" value="1"/>
</dbReference>
<dbReference type="FunFam" id="1.10.4200.10:FF:000003">
    <property type="entry name" value="Probable 2-(5''-triphosphoribosyl)-3'-dephosphocoenzyme-A synthase"/>
    <property type="match status" value="1"/>
</dbReference>
<dbReference type="Gene3D" id="1.10.4200.10">
    <property type="entry name" value="Triphosphoribosyl-dephospho-CoA protein"/>
    <property type="match status" value="2"/>
</dbReference>
<dbReference type="HAMAP" id="MF_01883">
    <property type="entry name" value="MdcB"/>
    <property type="match status" value="1"/>
</dbReference>
<dbReference type="InterPro" id="IPR002736">
    <property type="entry name" value="CitG"/>
</dbReference>
<dbReference type="InterPro" id="IPR017555">
    <property type="entry name" value="TriPribosyl-deP-CoA_syn"/>
</dbReference>
<dbReference type="NCBIfam" id="TIGR03132">
    <property type="entry name" value="malonate_mdcB"/>
    <property type="match status" value="1"/>
</dbReference>
<dbReference type="NCBIfam" id="NF002315">
    <property type="entry name" value="PRK01237.1"/>
    <property type="match status" value="1"/>
</dbReference>
<dbReference type="PANTHER" id="PTHR30201:SF2">
    <property type="entry name" value="2-(5''-TRIPHOSPHORIBOSYL)-3'-DEPHOSPHOCOENZYME-A SYNTHASE"/>
    <property type="match status" value="1"/>
</dbReference>
<dbReference type="PANTHER" id="PTHR30201">
    <property type="entry name" value="TRIPHOSPHORIBOSYL-DEPHOSPHO-COA SYNTHASE"/>
    <property type="match status" value="1"/>
</dbReference>
<dbReference type="Pfam" id="PF01874">
    <property type="entry name" value="CitG"/>
    <property type="match status" value="1"/>
</dbReference>
<name>MDCB_PSEAB</name>